<dbReference type="EMBL" id="CP000010">
    <property type="protein sequence ID" value="AAU48029.1"/>
    <property type="molecule type" value="Genomic_DNA"/>
</dbReference>
<dbReference type="RefSeq" id="WP_004195829.1">
    <property type="nucleotide sequence ID" value="NC_006348.1"/>
</dbReference>
<dbReference type="RefSeq" id="YP_104459.1">
    <property type="nucleotide sequence ID" value="NC_006348.1"/>
</dbReference>
<dbReference type="SMR" id="Q62FR8"/>
<dbReference type="KEGG" id="bma:BMA2954"/>
<dbReference type="PATRIC" id="fig|243160.12.peg.3023"/>
<dbReference type="eggNOG" id="COG0712">
    <property type="taxonomic scope" value="Bacteria"/>
</dbReference>
<dbReference type="HOGENOM" id="CLU_085114_3_0_4"/>
<dbReference type="Proteomes" id="UP000006693">
    <property type="component" value="Chromosome 1"/>
</dbReference>
<dbReference type="GO" id="GO:0005886">
    <property type="term" value="C:plasma membrane"/>
    <property type="evidence" value="ECO:0007669"/>
    <property type="project" value="UniProtKB-SubCell"/>
</dbReference>
<dbReference type="GO" id="GO:0045259">
    <property type="term" value="C:proton-transporting ATP synthase complex"/>
    <property type="evidence" value="ECO:0007669"/>
    <property type="project" value="UniProtKB-KW"/>
</dbReference>
<dbReference type="GO" id="GO:0046933">
    <property type="term" value="F:proton-transporting ATP synthase activity, rotational mechanism"/>
    <property type="evidence" value="ECO:0007669"/>
    <property type="project" value="UniProtKB-UniRule"/>
</dbReference>
<dbReference type="Gene3D" id="1.10.520.20">
    <property type="entry name" value="N-terminal domain of the delta subunit of the F1F0-ATP synthase"/>
    <property type="match status" value="1"/>
</dbReference>
<dbReference type="HAMAP" id="MF_01416">
    <property type="entry name" value="ATP_synth_delta_bact"/>
    <property type="match status" value="1"/>
</dbReference>
<dbReference type="InterPro" id="IPR026015">
    <property type="entry name" value="ATP_synth_OSCP/delta_N_sf"/>
</dbReference>
<dbReference type="InterPro" id="IPR000711">
    <property type="entry name" value="ATPase_OSCP/dsu"/>
</dbReference>
<dbReference type="NCBIfam" id="TIGR01145">
    <property type="entry name" value="ATP_synt_delta"/>
    <property type="match status" value="1"/>
</dbReference>
<dbReference type="NCBIfam" id="NF004402">
    <property type="entry name" value="PRK05758.2-2"/>
    <property type="match status" value="1"/>
</dbReference>
<dbReference type="PANTHER" id="PTHR11910">
    <property type="entry name" value="ATP SYNTHASE DELTA CHAIN"/>
    <property type="match status" value="1"/>
</dbReference>
<dbReference type="Pfam" id="PF00213">
    <property type="entry name" value="OSCP"/>
    <property type="match status" value="1"/>
</dbReference>
<dbReference type="PRINTS" id="PR00125">
    <property type="entry name" value="ATPASEDELTA"/>
</dbReference>
<dbReference type="SUPFAM" id="SSF47928">
    <property type="entry name" value="N-terminal domain of the delta subunit of the F1F0-ATP synthase"/>
    <property type="match status" value="1"/>
</dbReference>
<feature type="chain" id="PRO_0000370921" description="ATP synthase subunit delta">
    <location>
        <begin position="1"/>
        <end position="179"/>
    </location>
</feature>
<evidence type="ECO:0000255" key="1">
    <source>
        <dbReference type="HAMAP-Rule" id="MF_01416"/>
    </source>
</evidence>
<name>ATPD_BURMA</name>
<organism>
    <name type="scientific">Burkholderia mallei (strain ATCC 23344)</name>
    <dbReference type="NCBI Taxonomy" id="243160"/>
    <lineage>
        <taxon>Bacteria</taxon>
        <taxon>Pseudomonadati</taxon>
        <taxon>Pseudomonadota</taxon>
        <taxon>Betaproteobacteria</taxon>
        <taxon>Burkholderiales</taxon>
        <taxon>Burkholderiaceae</taxon>
        <taxon>Burkholderia</taxon>
        <taxon>pseudomallei group</taxon>
    </lineage>
</organism>
<protein>
    <recommendedName>
        <fullName evidence="1">ATP synthase subunit delta</fullName>
    </recommendedName>
    <alternativeName>
        <fullName evidence="1">ATP synthase F(1) sector subunit delta</fullName>
    </alternativeName>
    <alternativeName>
        <fullName evidence="1">F-type ATPase subunit delta</fullName>
        <shortName evidence="1">F-ATPase subunit delta</shortName>
    </alternativeName>
</protein>
<keyword id="KW-0066">ATP synthesis</keyword>
<keyword id="KW-0997">Cell inner membrane</keyword>
<keyword id="KW-1003">Cell membrane</keyword>
<keyword id="KW-0139">CF(1)</keyword>
<keyword id="KW-0375">Hydrogen ion transport</keyword>
<keyword id="KW-0406">Ion transport</keyword>
<keyword id="KW-0472">Membrane</keyword>
<keyword id="KW-1185">Reference proteome</keyword>
<keyword id="KW-0813">Transport</keyword>
<comment type="function">
    <text evidence="1">F(1)F(0) ATP synthase produces ATP from ADP in the presence of a proton or sodium gradient. F-type ATPases consist of two structural domains, F(1) containing the extramembraneous catalytic core and F(0) containing the membrane proton channel, linked together by a central stalk and a peripheral stalk. During catalysis, ATP synthesis in the catalytic domain of F(1) is coupled via a rotary mechanism of the central stalk subunits to proton translocation.</text>
</comment>
<comment type="function">
    <text evidence="1">This protein is part of the stalk that links CF(0) to CF(1). It either transmits conformational changes from CF(0) to CF(1) or is implicated in proton conduction.</text>
</comment>
<comment type="subunit">
    <text evidence="1">F-type ATPases have 2 components, F(1) - the catalytic core - and F(0) - the membrane proton channel. F(1) has five subunits: alpha(3), beta(3), gamma(1), delta(1), epsilon(1). F(0) has three main subunits: a(1), b(2) and c(10-14). The alpha and beta chains form an alternating ring which encloses part of the gamma chain. F(1) is attached to F(0) by a central stalk formed by the gamma and epsilon chains, while a peripheral stalk is formed by the delta and b chains.</text>
</comment>
<comment type="subcellular location">
    <subcellularLocation>
        <location evidence="1">Cell inner membrane</location>
        <topology evidence="1">Peripheral membrane protein</topology>
    </subcellularLocation>
</comment>
<comment type="similarity">
    <text evidence="1">Belongs to the ATPase delta chain family.</text>
</comment>
<gene>
    <name evidence="1" type="primary">atpH</name>
    <name type="ordered locus">BMA2954</name>
</gene>
<sequence>MAELATIARPYAEALFRVAEGGDISAWSTLVQELAQVAQLPEVLSVASSPKVSRTQVAELLLAALKSPLASGAQAKNFVQMLVDNHRIALLPEIAVQFEALKNAREGAADVQIVSAFPLEGAQLAELVTSLERKFKRKLKPAVEVDSSLIGGVRVTVGDEVLDTSVRARLAGMQAALTA</sequence>
<accession>Q62FR8</accession>
<reference key="1">
    <citation type="journal article" date="2004" name="Proc. Natl. Acad. Sci. U.S.A.">
        <title>Structural flexibility in the Burkholderia mallei genome.</title>
        <authorList>
            <person name="Nierman W.C."/>
            <person name="DeShazer D."/>
            <person name="Kim H.S."/>
            <person name="Tettelin H."/>
            <person name="Nelson K.E."/>
            <person name="Feldblyum T.V."/>
            <person name="Ulrich R.L."/>
            <person name="Ronning C.M."/>
            <person name="Brinkac L.M."/>
            <person name="Daugherty S.C."/>
            <person name="Davidsen T.D."/>
            <person name="DeBoy R.T."/>
            <person name="Dimitrov G."/>
            <person name="Dodson R.J."/>
            <person name="Durkin A.S."/>
            <person name="Gwinn M.L."/>
            <person name="Haft D.H."/>
            <person name="Khouri H.M."/>
            <person name="Kolonay J.F."/>
            <person name="Madupu R."/>
            <person name="Mohammoud Y."/>
            <person name="Nelson W.C."/>
            <person name="Radune D."/>
            <person name="Romero C.M."/>
            <person name="Sarria S."/>
            <person name="Selengut J."/>
            <person name="Shamblin C."/>
            <person name="Sullivan S.A."/>
            <person name="White O."/>
            <person name="Yu Y."/>
            <person name="Zafar N."/>
            <person name="Zhou L."/>
            <person name="Fraser C.M."/>
        </authorList>
    </citation>
    <scope>NUCLEOTIDE SEQUENCE [LARGE SCALE GENOMIC DNA]</scope>
    <source>
        <strain>ATCC 23344</strain>
    </source>
</reference>
<proteinExistence type="inferred from homology"/>